<evidence type="ECO:0000255" key="1">
    <source>
        <dbReference type="HAMAP-Rule" id="MF_01464"/>
    </source>
</evidence>
<organism>
    <name type="scientific">Rickettsia prowazekii (strain Madrid E)</name>
    <dbReference type="NCBI Taxonomy" id="272947"/>
    <lineage>
        <taxon>Bacteria</taxon>
        <taxon>Pseudomonadati</taxon>
        <taxon>Pseudomonadota</taxon>
        <taxon>Alphaproteobacteria</taxon>
        <taxon>Rickettsiales</taxon>
        <taxon>Rickettsiaceae</taxon>
        <taxon>Rickettsieae</taxon>
        <taxon>Rickettsia</taxon>
        <taxon>typhus group</taxon>
    </lineage>
</organism>
<dbReference type="EMBL" id="AJ235270">
    <property type="protein sequence ID" value="CAA14583.1"/>
    <property type="molecule type" value="Genomic_DNA"/>
</dbReference>
<dbReference type="PIR" id="H71720">
    <property type="entry name" value="H71720"/>
</dbReference>
<dbReference type="RefSeq" id="NP_220506.1">
    <property type="nucleotide sequence ID" value="NC_000963.1"/>
</dbReference>
<dbReference type="RefSeq" id="WP_004599750.1">
    <property type="nucleotide sequence ID" value="NC_000963.1"/>
</dbReference>
<dbReference type="SMR" id="Q9ZE34"/>
<dbReference type="STRING" id="272947.gene:17555197"/>
<dbReference type="EnsemblBacteria" id="CAA14583">
    <property type="protein sequence ID" value="CAA14583"/>
    <property type="gene ID" value="CAA14583"/>
</dbReference>
<dbReference type="GeneID" id="57569242"/>
<dbReference type="KEGG" id="rpr:RP114"/>
<dbReference type="PATRIC" id="fig|272947.5.peg.116"/>
<dbReference type="eggNOG" id="COG0341">
    <property type="taxonomic scope" value="Bacteria"/>
</dbReference>
<dbReference type="HOGENOM" id="CLU_050012_1_1_5"/>
<dbReference type="OrthoDB" id="9774769at2"/>
<dbReference type="Proteomes" id="UP000002480">
    <property type="component" value="Chromosome"/>
</dbReference>
<dbReference type="GO" id="GO:0005886">
    <property type="term" value="C:plasma membrane"/>
    <property type="evidence" value="ECO:0007669"/>
    <property type="project" value="UniProtKB-SubCell"/>
</dbReference>
<dbReference type="GO" id="GO:0015450">
    <property type="term" value="F:protein-transporting ATPase activity"/>
    <property type="evidence" value="ECO:0007669"/>
    <property type="project" value="InterPro"/>
</dbReference>
<dbReference type="GO" id="GO:0065002">
    <property type="term" value="P:intracellular protein transmembrane transport"/>
    <property type="evidence" value="ECO:0007669"/>
    <property type="project" value="UniProtKB-UniRule"/>
</dbReference>
<dbReference type="GO" id="GO:0006605">
    <property type="term" value="P:protein targeting"/>
    <property type="evidence" value="ECO:0007669"/>
    <property type="project" value="UniProtKB-UniRule"/>
</dbReference>
<dbReference type="GO" id="GO:0043952">
    <property type="term" value="P:protein transport by the Sec complex"/>
    <property type="evidence" value="ECO:0007669"/>
    <property type="project" value="UniProtKB-UniRule"/>
</dbReference>
<dbReference type="Gene3D" id="1.20.1640.10">
    <property type="entry name" value="Multidrug efflux transporter AcrB transmembrane domain"/>
    <property type="match status" value="1"/>
</dbReference>
<dbReference type="HAMAP" id="MF_01464_B">
    <property type="entry name" value="SecF_B"/>
    <property type="match status" value="1"/>
</dbReference>
<dbReference type="InterPro" id="IPR022813">
    <property type="entry name" value="SecD/SecF_arch_bac"/>
</dbReference>
<dbReference type="InterPro" id="IPR022645">
    <property type="entry name" value="SecD/SecF_bac"/>
</dbReference>
<dbReference type="InterPro" id="IPR022646">
    <property type="entry name" value="SecD/SecF_CS"/>
</dbReference>
<dbReference type="InterPro" id="IPR048634">
    <property type="entry name" value="SecD_SecF_C"/>
</dbReference>
<dbReference type="InterPro" id="IPR055344">
    <property type="entry name" value="SecD_SecF_C_bact"/>
</dbReference>
<dbReference type="InterPro" id="IPR005665">
    <property type="entry name" value="SecF_bac"/>
</dbReference>
<dbReference type="NCBIfam" id="TIGR00916">
    <property type="entry name" value="2A0604s01"/>
    <property type="match status" value="1"/>
</dbReference>
<dbReference type="NCBIfam" id="TIGR00966">
    <property type="entry name" value="transloc_SecF"/>
    <property type="match status" value="1"/>
</dbReference>
<dbReference type="PANTHER" id="PTHR30081:SF8">
    <property type="entry name" value="PROTEIN TRANSLOCASE SUBUNIT SECF"/>
    <property type="match status" value="1"/>
</dbReference>
<dbReference type="PANTHER" id="PTHR30081">
    <property type="entry name" value="PROTEIN-EXPORT MEMBRANE PROTEIN SEC"/>
    <property type="match status" value="1"/>
</dbReference>
<dbReference type="Pfam" id="PF07549">
    <property type="entry name" value="Sec_GG"/>
    <property type="match status" value="1"/>
</dbReference>
<dbReference type="Pfam" id="PF02355">
    <property type="entry name" value="SecD_SecF_C"/>
    <property type="match status" value="1"/>
</dbReference>
<dbReference type="PRINTS" id="PR01755">
    <property type="entry name" value="SECFTRNLCASE"/>
</dbReference>
<dbReference type="SUPFAM" id="SSF82866">
    <property type="entry name" value="Multidrug efflux transporter AcrB transmembrane domain"/>
    <property type="match status" value="1"/>
</dbReference>
<proteinExistence type="inferred from homology"/>
<feature type="chain" id="PRO_0000095986" description="Protein translocase subunit SecF">
    <location>
        <begin position="1"/>
        <end position="311"/>
    </location>
</feature>
<feature type="transmembrane region" description="Helical" evidence="1">
    <location>
        <begin position="23"/>
        <end position="42"/>
    </location>
</feature>
<feature type="transmembrane region" description="Helical" evidence="1">
    <location>
        <begin position="140"/>
        <end position="160"/>
    </location>
</feature>
<feature type="transmembrane region" description="Helical" evidence="1">
    <location>
        <begin position="164"/>
        <end position="184"/>
    </location>
</feature>
<feature type="transmembrane region" description="Helical" evidence="1">
    <location>
        <begin position="194"/>
        <end position="214"/>
    </location>
</feature>
<feature type="transmembrane region" description="Helical" evidence="1">
    <location>
        <begin position="246"/>
        <end position="266"/>
    </location>
</feature>
<feature type="transmembrane region" description="Helical" evidence="1">
    <location>
        <begin position="272"/>
        <end position="292"/>
    </location>
</feature>
<keyword id="KW-0997">Cell inner membrane</keyword>
<keyword id="KW-1003">Cell membrane</keyword>
<keyword id="KW-0472">Membrane</keyword>
<keyword id="KW-0653">Protein transport</keyword>
<keyword id="KW-1185">Reference proteome</keyword>
<keyword id="KW-0811">Translocation</keyword>
<keyword id="KW-0812">Transmembrane</keyword>
<keyword id="KW-1133">Transmembrane helix</keyword>
<keyword id="KW-0813">Transport</keyword>
<name>SECF_RICPR</name>
<protein>
    <recommendedName>
        <fullName>Protein translocase subunit SecF</fullName>
    </recommendedName>
</protein>
<sequence>MQIYPLRFVPNKIDFDFMNFKKVSYSFSIILSLISLIWISIYKFNFGIDFVGGIVIEVRLDQAPDLPKMRAVLSALEIGEVVLQNFGSERDLSIRFGSSSEENLMKNIDIIKTSLRNNFPYNFEYRKVDFVGPQVGRQLIEAGAMAMLFSFLAIMVYIGVRFEWYFGFGILIALVHDVILALGFMSMTKLDFNLSTIAAVLTIIGYSVNDSVVIYDRIRENLRKYHKKNITEIINLSINETLSRTILTVITTLLANLALILFGGKAIHSFSVLVFFGIIAGTYSSIFISAPILTMFANRKFNKKVITQGKG</sequence>
<gene>
    <name evidence="1" type="primary">secF</name>
    <name type="ordered locus">RP114</name>
</gene>
<comment type="function">
    <text evidence="1">Part of the Sec protein translocase complex. Interacts with the SecYEG preprotein conducting channel. SecDF uses the proton motive force (PMF) to complete protein translocation after the ATP-dependent function of SecA.</text>
</comment>
<comment type="subunit">
    <text evidence="1">Forms a complex with SecD. Part of the essential Sec protein translocation apparatus which comprises SecA, SecYEG and auxiliary proteins SecDF-YajC and YidC.</text>
</comment>
<comment type="subcellular location">
    <subcellularLocation>
        <location evidence="1">Cell inner membrane</location>
        <topology evidence="1">Multi-pass membrane protein</topology>
    </subcellularLocation>
</comment>
<comment type="similarity">
    <text evidence="1">Belongs to the SecD/SecF family. SecF subfamily.</text>
</comment>
<accession>Q9ZE34</accession>
<reference key="1">
    <citation type="journal article" date="1998" name="Nature">
        <title>The genome sequence of Rickettsia prowazekii and the origin of mitochondria.</title>
        <authorList>
            <person name="Andersson S.G.E."/>
            <person name="Zomorodipour A."/>
            <person name="Andersson J.O."/>
            <person name="Sicheritz-Ponten T."/>
            <person name="Alsmark U.C.M."/>
            <person name="Podowski R.M."/>
            <person name="Naeslund A.K."/>
            <person name="Eriksson A.-S."/>
            <person name="Winkler H.H."/>
            <person name="Kurland C.G."/>
        </authorList>
    </citation>
    <scope>NUCLEOTIDE SEQUENCE [LARGE SCALE GENOMIC DNA]</scope>
    <source>
        <strain>Madrid E</strain>
    </source>
</reference>